<comment type="function">
    <text evidence="1">Iron-storage protein, whose ferroxidase center binds Fe(2+), oxidizes it using dioxygen to Fe(3+), and participates in the subsequent Fe(3+) oxide mineral core formation within the central cavity of the BFR protein shell (By similarity). Probably plays a crucial role in the intracellular existence of this organism by functioning as a temporary depository for iron in iron deprivation.</text>
</comment>
<comment type="catalytic activity">
    <reaction>
        <text>4 Fe(2+) + O2 + 4 H(+) = 4 Fe(3+) + 2 H2O</text>
        <dbReference type="Rhea" id="RHEA:11148"/>
        <dbReference type="ChEBI" id="CHEBI:15377"/>
        <dbReference type="ChEBI" id="CHEBI:15378"/>
        <dbReference type="ChEBI" id="CHEBI:15379"/>
        <dbReference type="ChEBI" id="CHEBI:29033"/>
        <dbReference type="ChEBI" id="CHEBI:29034"/>
        <dbReference type="EC" id="1.16.3.1"/>
    </reaction>
</comment>
<comment type="catalytic activity">
    <reaction evidence="2">
        <text>Fe(2+)(in) = Fe(2+)(out)</text>
        <dbReference type="Rhea" id="RHEA:28486"/>
        <dbReference type="ChEBI" id="CHEBI:29033"/>
    </reaction>
</comment>
<comment type="cofactor">
    <cofactor evidence="1">
        <name>heme b</name>
        <dbReference type="ChEBI" id="CHEBI:60344"/>
    </cofactor>
    <text evidence="1">Binds 1 heme b (iron(II)-protoporphyrin IX) group per dimer.</text>
</comment>
<comment type="subunit">
    <text evidence="1">Homooligomer of 24 subunits, arranged as 12 dimers, that are packed together to form an approximately spherical molecule with a central cavity, in which large amounts of iron can be deposited.</text>
</comment>
<comment type="subcellular location">
    <subcellularLocation>
        <location evidence="4">Cytoplasm</location>
        <location evidence="4">Cytosol</location>
    </subcellularLocation>
    <subcellularLocation>
        <location evidence="4">Membrane</location>
        <topology evidence="4">Peripheral membrane protein</topology>
    </subcellularLocation>
    <text evidence="4">Soluble or peripheral membrane protein.</text>
</comment>
<comment type="similarity">
    <text evidence="4">Belongs to the bacterioferritin family.</text>
</comment>
<protein>
    <recommendedName>
        <fullName>Bacterioferritin</fullName>
        <shortName>BFR</shortName>
        <ecNumber>1.16.3.1</ecNumber>
    </recommendedName>
    <alternativeName>
        <fullName>Major membrane protein II</fullName>
        <shortName>MMP-II</shortName>
    </alternativeName>
</protein>
<gene>
    <name type="primary">bfr</name>
    <name type="synonym">bfrA</name>
    <name type="ordered locus">ML2038</name>
</gene>
<sequence length="159" mass="18263">MQGDPDVLRLLNEQLTSELTAINQYFLHSKMQENWGFTELAERTRVESFDEMRHAEAITDRILLLDGLPNYQRIGSLRVGQTLREQFEADLAIEYEVMSRLKPGIIMCREKQDSTSAVLLEKIVADEEEHIDYLETQLALMGQLGEELYSAQCVSRPPS</sequence>
<proteinExistence type="evidence at protein level"/>
<name>BFR_MYCLE</name>
<organism>
    <name type="scientific">Mycobacterium leprae (strain TN)</name>
    <dbReference type="NCBI Taxonomy" id="272631"/>
    <lineage>
        <taxon>Bacteria</taxon>
        <taxon>Bacillati</taxon>
        <taxon>Actinomycetota</taxon>
        <taxon>Actinomycetes</taxon>
        <taxon>Mycobacteriales</taxon>
        <taxon>Mycobacteriaceae</taxon>
        <taxon>Mycobacterium</taxon>
    </lineage>
</organism>
<feature type="chain" id="PRO_0000192599" description="Bacterioferritin">
    <location>
        <begin position="1"/>
        <end position="159"/>
    </location>
</feature>
<feature type="domain" description="Ferritin-like diiron" evidence="3">
    <location>
        <begin position="1"/>
        <end position="145"/>
    </location>
</feature>
<feature type="binding site" evidence="3">
    <location>
        <position position="18"/>
    </location>
    <ligand>
        <name>Fe cation</name>
        <dbReference type="ChEBI" id="CHEBI:24875"/>
        <label>1</label>
    </ligand>
</feature>
<feature type="binding site" evidence="3">
    <location>
        <position position="51"/>
    </location>
    <ligand>
        <name>Fe cation</name>
        <dbReference type="ChEBI" id="CHEBI:24875"/>
        <label>1</label>
    </ligand>
</feature>
<feature type="binding site" evidence="3">
    <location>
        <position position="51"/>
    </location>
    <ligand>
        <name>Fe cation</name>
        <dbReference type="ChEBI" id="CHEBI:24875"/>
        <label>2</label>
    </ligand>
</feature>
<feature type="binding site" description="axial binding residue" evidence="3">
    <location>
        <position position="52"/>
    </location>
    <ligand>
        <name>heme b</name>
        <dbReference type="ChEBI" id="CHEBI:60344"/>
        <note>ligand shared between dimeric partners</note>
    </ligand>
    <ligandPart>
        <name>Fe</name>
        <dbReference type="ChEBI" id="CHEBI:18248"/>
    </ligandPart>
</feature>
<feature type="binding site" evidence="3">
    <location>
        <position position="54"/>
    </location>
    <ligand>
        <name>Fe cation</name>
        <dbReference type="ChEBI" id="CHEBI:24875"/>
        <label>1</label>
    </ligand>
</feature>
<feature type="binding site" evidence="3">
    <location>
        <position position="94"/>
    </location>
    <ligand>
        <name>Fe cation</name>
        <dbReference type="ChEBI" id="CHEBI:24875"/>
        <label>2</label>
    </ligand>
</feature>
<feature type="binding site" evidence="3">
    <location>
        <position position="127"/>
    </location>
    <ligand>
        <name>Fe cation</name>
        <dbReference type="ChEBI" id="CHEBI:24875"/>
        <label>1</label>
    </ligand>
</feature>
<feature type="binding site" evidence="3">
    <location>
        <position position="127"/>
    </location>
    <ligand>
        <name>Fe cation</name>
        <dbReference type="ChEBI" id="CHEBI:24875"/>
        <label>2</label>
    </ligand>
</feature>
<feature type="binding site" evidence="3">
    <location>
        <position position="130"/>
    </location>
    <ligand>
        <name>Fe cation</name>
        <dbReference type="ChEBI" id="CHEBI:24875"/>
        <label>2</label>
    </ligand>
</feature>
<reference key="1">
    <citation type="journal article" date="1994" name="J. Exp. Med.">
        <title>Purification, characterization, gene sequence, and significance of a bacterioferritin from Mycobacterium leprae.</title>
        <authorList>
            <person name="Pessolani M.C.V."/>
            <person name="Smith D.R."/>
            <person name="Rivoire B."/>
            <person name="McCormick J."/>
            <person name="Hefta S.A."/>
            <person name="Cole S.T."/>
            <person name="Brennan P.J."/>
        </authorList>
    </citation>
    <scope>NUCLEOTIDE SEQUENCE [GENOMIC DNA]</scope>
    <scope>PARTIAL PROTEIN SEQUENCE</scope>
</reference>
<reference key="2">
    <citation type="journal article" date="2001" name="Nature">
        <title>Massive gene decay in the leprosy bacillus.</title>
        <authorList>
            <person name="Cole S.T."/>
            <person name="Eiglmeier K."/>
            <person name="Parkhill J."/>
            <person name="James K.D."/>
            <person name="Thomson N.R."/>
            <person name="Wheeler P.R."/>
            <person name="Honore N."/>
            <person name="Garnier T."/>
            <person name="Churcher C.M."/>
            <person name="Harris D.E."/>
            <person name="Mungall K.L."/>
            <person name="Basham D."/>
            <person name="Brown D."/>
            <person name="Chillingworth T."/>
            <person name="Connor R."/>
            <person name="Davies R.M."/>
            <person name="Devlin K."/>
            <person name="Duthoy S."/>
            <person name="Feltwell T."/>
            <person name="Fraser A."/>
            <person name="Hamlin N."/>
            <person name="Holroyd S."/>
            <person name="Hornsby T."/>
            <person name="Jagels K."/>
            <person name="Lacroix C."/>
            <person name="Maclean J."/>
            <person name="Moule S."/>
            <person name="Murphy L.D."/>
            <person name="Oliver K."/>
            <person name="Quail M.A."/>
            <person name="Rajandream M.A."/>
            <person name="Rutherford K.M."/>
            <person name="Rutter S."/>
            <person name="Seeger K."/>
            <person name="Simon S."/>
            <person name="Simmonds M."/>
            <person name="Skelton J."/>
            <person name="Squares R."/>
            <person name="Squares S."/>
            <person name="Stevens K."/>
            <person name="Taylor K."/>
            <person name="Whitehead S."/>
            <person name="Woodward J.R."/>
            <person name="Barrell B.G."/>
        </authorList>
    </citation>
    <scope>NUCLEOTIDE SEQUENCE [LARGE SCALE GENOMIC DNA]</scope>
    <source>
        <strain>TN</strain>
    </source>
</reference>
<reference key="3">
    <citation type="journal article" date="1990" name="J. Biol. Chem.">
        <title>The major native proteins of the leprosy bacillus.</title>
        <authorList>
            <person name="Hunter S.W."/>
            <person name="Rivoire B."/>
            <person name="Mehra V."/>
            <person name="Bloom B.R."/>
            <person name="Brennan P.J."/>
        </authorList>
    </citation>
    <scope>PRELIMINARY PROTEIN SEQUENCE OF 1-14</scope>
</reference>
<evidence type="ECO:0000250" key="1"/>
<evidence type="ECO:0000250" key="2">
    <source>
        <dbReference type="UniProtKB" id="Q9HWF9"/>
    </source>
</evidence>
<evidence type="ECO:0000255" key="3">
    <source>
        <dbReference type="PROSITE-ProRule" id="PRU00085"/>
    </source>
</evidence>
<evidence type="ECO:0000305" key="4"/>
<dbReference type="EC" id="1.16.3.1"/>
<dbReference type="EMBL" id="L01095">
    <property type="protein sequence ID" value="AAA21339.1"/>
    <property type="molecule type" value="Genomic_DNA"/>
</dbReference>
<dbReference type="EMBL" id="AL583924">
    <property type="protein sequence ID" value="CAC30993.1"/>
    <property type="molecule type" value="Genomic_DNA"/>
</dbReference>
<dbReference type="PIR" id="A87164">
    <property type="entry name" value="A87164"/>
</dbReference>
<dbReference type="RefSeq" id="NP_302363.1">
    <property type="nucleotide sequence ID" value="NC_002677.1"/>
</dbReference>
<dbReference type="RefSeq" id="WP_010908683.1">
    <property type="nucleotide sequence ID" value="NC_002677.1"/>
</dbReference>
<dbReference type="SMR" id="P43315"/>
<dbReference type="STRING" id="272631.gene:17575890"/>
<dbReference type="KEGG" id="mle:ML2038"/>
<dbReference type="PATRIC" id="fig|272631.5.peg.3840"/>
<dbReference type="Leproma" id="ML2038"/>
<dbReference type="eggNOG" id="COG2193">
    <property type="taxonomic scope" value="Bacteria"/>
</dbReference>
<dbReference type="HOGENOM" id="CLU_104506_2_0_11"/>
<dbReference type="OrthoDB" id="9800505at2"/>
<dbReference type="Proteomes" id="UP000000806">
    <property type="component" value="Chromosome"/>
</dbReference>
<dbReference type="GO" id="GO:0005829">
    <property type="term" value="C:cytosol"/>
    <property type="evidence" value="ECO:0007669"/>
    <property type="project" value="UniProtKB-SubCell"/>
</dbReference>
<dbReference type="GO" id="GO:0016020">
    <property type="term" value="C:membrane"/>
    <property type="evidence" value="ECO:0007669"/>
    <property type="project" value="UniProtKB-SubCell"/>
</dbReference>
<dbReference type="GO" id="GO:0008199">
    <property type="term" value="F:ferric iron binding"/>
    <property type="evidence" value="ECO:0007669"/>
    <property type="project" value="InterPro"/>
</dbReference>
<dbReference type="GO" id="GO:0004322">
    <property type="term" value="F:ferroxidase activity"/>
    <property type="evidence" value="ECO:0007669"/>
    <property type="project" value="UniProtKB-EC"/>
</dbReference>
<dbReference type="GO" id="GO:0020037">
    <property type="term" value="F:heme binding"/>
    <property type="evidence" value="ECO:0007669"/>
    <property type="project" value="TreeGrafter"/>
</dbReference>
<dbReference type="GO" id="GO:0006879">
    <property type="term" value="P:intracellular iron ion homeostasis"/>
    <property type="evidence" value="ECO:0007669"/>
    <property type="project" value="UniProtKB-KW"/>
</dbReference>
<dbReference type="GO" id="GO:0006826">
    <property type="term" value="P:iron ion transport"/>
    <property type="evidence" value="ECO:0007669"/>
    <property type="project" value="InterPro"/>
</dbReference>
<dbReference type="CDD" id="cd00907">
    <property type="entry name" value="Bacterioferritin"/>
    <property type="match status" value="1"/>
</dbReference>
<dbReference type="FunFam" id="1.20.1260.10:FF:000005">
    <property type="entry name" value="Bacterioferritin"/>
    <property type="match status" value="1"/>
</dbReference>
<dbReference type="Gene3D" id="1.20.1260.10">
    <property type="match status" value="1"/>
</dbReference>
<dbReference type="InterPro" id="IPR002024">
    <property type="entry name" value="Bacterioferritin"/>
</dbReference>
<dbReference type="InterPro" id="IPR012347">
    <property type="entry name" value="Ferritin-like"/>
</dbReference>
<dbReference type="InterPro" id="IPR009040">
    <property type="entry name" value="Ferritin-like_diiron"/>
</dbReference>
<dbReference type="InterPro" id="IPR009078">
    <property type="entry name" value="Ferritin-like_SF"/>
</dbReference>
<dbReference type="InterPro" id="IPR008331">
    <property type="entry name" value="Ferritin_DPS_dom"/>
</dbReference>
<dbReference type="NCBIfam" id="TIGR00754">
    <property type="entry name" value="bfr"/>
    <property type="match status" value="1"/>
</dbReference>
<dbReference type="PANTHER" id="PTHR30295">
    <property type="entry name" value="BACTERIOFERRITIN"/>
    <property type="match status" value="1"/>
</dbReference>
<dbReference type="PANTHER" id="PTHR30295:SF0">
    <property type="entry name" value="BACTERIOFERRITIN"/>
    <property type="match status" value="1"/>
</dbReference>
<dbReference type="Pfam" id="PF00210">
    <property type="entry name" value="Ferritin"/>
    <property type="match status" value="1"/>
</dbReference>
<dbReference type="PIRSF" id="PIRSF002560">
    <property type="entry name" value="Bacterioferritin"/>
    <property type="match status" value="1"/>
</dbReference>
<dbReference type="PRINTS" id="PR00601">
    <property type="entry name" value="BACFERRITIN"/>
</dbReference>
<dbReference type="SUPFAM" id="SSF47240">
    <property type="entry name" value="Ferritin-like"/>
    <property type="match status" value="1"/>
</dbReference>
<dbReference type="PROSITE" id="PS00549">
    <property type="entry name" value="BACTERIOFERRITIN"/>
    <property type="match status" value="1"/>
</dbReference>
<dbReference type="PROSITE" id="PS50905">
    <property type="entry name" value="FERRITIN_LIKE"/>
    <property type="match status" value="1"/>
</dbReference>
<keyword id="KW-0963">Cytoplasm</keyword>
<keyword id="KW-0903">Direct protein sequencing</keyword>
<keyword id="KW-0349">Heme</keyword>
<keyword id="KW-0408">Iron</keyword>
<keyword id="KW-0409">Iron storage</keyword>
<keyword id="KW-0472">Membrane</keyword>
<keyword id="KW-0479">Metal-binding</keyword>
<keyword id="KW-0560">Oxidoreductase</keyword>
<keyword id="KW-1185">Reference proteome</keyword>
<accession>P43315</accession>